<dbReference type="EC" id="1.1.99.1" evidence="1"/>
<dbReference type="EC" id="1.2.1.8" evidence="1"/>
<dbReference type="EMBL" id="CP001389">
    <property type="protein sequence ID" value="ACP24492.1"/>
    <property type="molecule type" value="Genomic_DNA"/>
</dbReference>
<dbReference type="RefSeq" id="WP_012707277.1">
    <property type="nucleotide sequence ID" value="NC_012587.1"/>
</dbReference>
<dbReference type="RefSeq" id="YP_002825245.1">
    <property type="nucleotide sequence ID" value="NC_012587.1"/>
</dbReference>
<dbReference type="SMR" id="C3MIE4"/>
<dbReference type="STRING" id="394.NGR_c06990"/>
<dbReference type="KEGG" id="rhi:NGR_c06990"/>
<dbReference type="PATRIC" id="fig|394.7.peg.3513"/>
<dbReference type="eggNOG" id="COG2303">
    <property type="taxonomic scope" value="Bacteria"/>
</dbReference>
<dbReference type="HOGENOM" id="CLU_002865_7_1_5"/>
<dbReference type="OrthoDB" id="9785276at2"/>
<dbReference type="UniPathway" id="UPA00529">
    <property type="reaction ID" value="UER00385"/>
</dbReference>
<dbReference type="Proteomes" id="UP000001054">
    <property type="component" value="Chromosome"/>
</dbReference>
<dbReference type="GO" id="GO:0016020">
    <property type="term" value="C:membrane"/>
    <property type="evidence" value="ECO:0007669"/>
    <property type="project" value="TreeGrafter"/>
</dbReference>
<dbReference type="GO" id="GO:0008802">
    <property type="term" value="F:betaine-aldehyde dehydrogenase (NAD+) activity"/>
    <property type="evidence" value="ECO:0007669"/>
    <property type="project" value="UniProtKB-EC"/>
</dbReference>
<dbReference type="GO" id="GO:0008812">
    <property type="term" value="F:choline dehydrogenase activity"/>
    <property type="evidence" value="ECO:0007669"/>
    <property type="project" value="UniProtKB-UniRule"/>
</dbReference>
<dbReference type="GO" id="GO:0050660">
    <property type="term" value="F:flavin adenine dinucleotide binding"/>
    <property type="evidence" value="ECO:0007669"/>
    <property type="project" value="InterPro"/>
</dbReference>
<dbReference type="GO" id="GO:0019285">
    <property type="term" value="P:glycine betaine biosynthetic process from choline"/>
    <property type="evidence" value="ECO:0007669"/>
    <property type="project" value="UniProtKB-UniRule"/>
</dbReference>
<dbReference type="Gene3D" id="3.50.50.60">
    <property type="entry name" value="FAD/NAD(P)-binding domain"/>
    <property type="match status" value="1"/>
</dbReference>
<dbReference type="Gene3D" id="3.30.560.10">
    <property type="entry name" value="Glucose Oxidase, domain 3"/>
    <property type="match status" value="1"/>
</dbReference>
<dbReference type="HAMAP" id="MF_00750">
    <property type="entry name" value="Choline_dehydrogen"/>
    <property type="match status" value="1"/>
</dbReference>
<dbReference type="InterPro" id="IPR011533">
    <property type="entry name" value="BetA"/>
</dbReference>
<dbReference type="InterPro" id="IPR036188">
    <property type="entry name" value="FAD/NAD-bd_sf"/>
</dbReference>
<dbReference type="InterPro" id="IPR012132">
    <property type="entry name" value="GMC_OxRdtase"/>
</dbReference>
<dbReference type="InterPro" id="IPR000172">
    <property type="entry name" value="GMC_OxRdtase_N"/>
</dbReference>
<dbReference type="InterPro" id="IPR007867">
    <property type="entry name" value="GMC_OxRtase_C"/>
</dbReference>
<dbReference type="NCBIfam" id="TIGR01810">
    <property type="entry name" value="betA"/>
    <property type="match status" value="1"/>
</dbReference>
<dbReference type="NCBIfam" id="NF002550">
    <property type="entry name" value="PRK02106.1"/>
    <property type="match status" value="1"/>
</dbReference>
<dbReference type="PANTHER" id="PTHR11552:SF147">
    <property type="entry name" value="CHOLINE DEHYDROGENASE, MITOCHONDRIAL"/>
    <property type="match status" value="1"/>
</dbReference>
<dbReference type="PANTHER" id="PTHR11552">
    <property type="entry name" value="GLUCOSE-METHANOL-CHOLINE GMC OXIDOREDUCTASE"/>
    <property type="match status" value="1"/>
</dbReference>
<dbReference type="Pfam" id="PF05199">
    <property type="entry name" value="GMC_oxred_C"/>
    <property type="match status" value="1"/>
</dbReference>
<dbReference type="Pfam" id="PF00732">
    <property type="entry name" value="GMC_oxred_N"/>
    <property type="match status" value="1"/>
</dbReference>
<dbReference type="PIRSF" id="PIRSF000137">
    <property type="entry name" value="Alcohol_oxidase"/>
    <property type="match status" value="1"/>
</dbReference>
<dbReference type="SUPFAM" id="SSF54373">
    <property type="entry name" value="FAD-linked reductases, C-terminal domain"/>
    <property type="match status" value="1"/>
</dbReference>
<dbReference type="SUPFAM" id="SSF51905">
    <property type="entry name" value="FAD/NAD(P)-binding domain"/>
    <property type="match status" value="1"/>
</dbReference>
<dbReference type="PROSITE" id="PS00623">
    <property type="entry name" value="GMC_OXRED_1"/>
    <property type="match status" value="1"/>
</dbReference>
<dbReference type="PROSITE" id="PS00624">
    <property type="entry name" value="GMC_OXRED_2"/>
    <property type="match status" value="1"/>
</dbReference>
<gene>
    <name evidence="1" type="primary">betA</name>
    <name type="ordered locus">NGR_c06990</name>
</gene>
<proteinExistence type="inferred from homology"/>
<keyword id="KW-0274">FAD</keyword>
<keyword id="KW-0285">Flavoprotein</keyword>
<keyword id="KW-0520">NAD</keyword>
<keyword id="KW-0560">Oxidoreductase</keyword>
<keyword id="KW-1185">Reference proteome</keyword>
<organism>
    <name type="scientific">Sinorhizobium fredii (strain NBRC 101917 / NGR234)</name>
    <dbReference type="NCBI Taxonomy" id="394"/>
    <lineage>
        <taxon>Bacteria</taxon>
        <taxon>Pseudomonadati</taxon>
        <taxon>Pseudomonadota</taxon>
        <taxon>Alphaproteobacteria</taxon>
        <taxon>Hyphomicrobiales</taxon>
        <taxon>Rhizobiaceae</taxon>
        <taxon>Sinorhizobium/Ensifer group</taxon>
        <taxon>Sinorhizobium</taxon>
    </lineage>
</organism>
<evidence type="ECO:0000255" key="1">
    <source>
        <dbReference type="HAMAP-Rule" id="MF_00750"/>
    </source>
</evidence>
<name>BETA_SINFN</name>
<sequence>MQADYIIIGSGSAGSALAHRLSEDSRNSVIVLEFGGTDIGPFIQMPAALAWPMSMNRYNWGYLSEPEPHLNNRRITAPRGKVIGGSSSINGMVYVRGHAEDFDRWEQLGAKGWAYADVLPYFKRMEHSHGGEDGWRGTDGPLHVQRGPVKNPLFHAFVEAGKQAGFEMTDDYNGSKQEGFGLMEQTTWRGRRWSAASAYLKPALKRPNVQLIRCFARKIVIENGRATGVEIERGGRIEVVKANREVIVSASSFNSPKLLMLSGIGPAAHLKDLGIDVKVDRPGVGQNLQDHMEFYFQQISTKPVSLYSWLPWFWQGVAGAQWLFFKSGLGISNQFEACAFLRSAPGVKQPDIQYHFLPVAIRYDGKAAANTHGFQVHVGYNLSKSRGSVTLRASDPKADPVIRFNYMSHPEDWEKFRHCVRLTREIFGQKAFDQYRGPEIQPGERVQTDEEIDAFLREHLESAYHPCGTCKMGSKDDPMAVVDPETRVIGVDGLRVADSSIFPHVTYGNLNAPSIMTGEKAADHILGKQPLARSNQEPWINPRWAISDR</sequence>
<accession>C3MIE4</accession>
<comment type="function">
    <text evidence="1">Involved in the biosynthesis of the osmoprotectant glycine betaine. Catalyzes the oxidation of choline to betaine aldehyde and betaine aldehyde to glycine betaine at the same rate.</text>
</comment>
<comment type="catalytic activity">
    <reaction evidence="1">
        <text>choline + A = betaine aldehyde + AH2</text>
        <dbReference type="Rhea" id="RHEA:17433"/>
        <dbReference type="ChEBI" id="CHEBI:13193"/>
        <dbReference type="ChEBI" id="CHEBI:15354"/>
        <dbReference type="ChEBI" id="CHEBI:15710"/>
        <dbReference type="ChEBI" id="CHEBI:17499"/>
        <dbReference type="EC" id="1.1.99.1"/>
    </reaction>
</comment>
<comment type="catalytic activity">
    <reaction evidence="1">
        <text>betaine aldehyde + NAD(+) + H2O = glycine betaine + NADH + 2 H(+)</text>
        <dbReference type="Rhea" id="RHEA:15305"/>
        <dbReference type="ChEBI" id="CHEBI:15377"/>
        <dbReference type="ChEBI" id="CHEBI:15378"/>
        <dbReference type="ChEBI" id="CHEBI:15710"/>
        <dbReference type="ChEBI" id="CHEBI:17750"/>
        <dbReference type="ChEBI" id="CHEBI:57540"/>
        <dbReference type="ChEBI" id="CHEBI:57945"/>
        <dbReference type="EC" id="1.2.1.8"/>
    </reaction>
</comment>
<comment type="cofactor">
    <cofactor evidence="1">
        <name>FAD</name>
        <dbReference type="ChEBI" id="CHEBI:57692"/>
    </cofactor>
</comment>
<comment type="pathway">
    <text evidence="1">Amine and polyamine biosynthesis; betaine biosynthesis via choline pathway; betaine aldehyde from choline (cytochrome c reductase route): step 1/1.</text>
</comment>
<comment type="similarity">
    <text evidence="1">Belongs to the GMC oxidoreductase family.</text>
</comment>
<feature type="chain" id="PRO_1000148352" description="Oxygen-dependent choline dehydrogenase">
    <location>
        <begin position="1"/>
        <end position="549"/>
    </location>
</feature>
<feature type="active site" description="Proton acceptor" evidence="1">
    <location>
        <position position="465"/>
    </location>
</feature>
<feature type="binding site" evidence="1">
    <location>
        <begin position="4"/>
        <end position="33"/>
    </location>
    <ligand>
        <name>FAD</name>
        <dbReference type="ChEBI" id="CHEBI:57692"/>
    </ligand>
</feature>
<protein>
    <recommendedName>
        <fullName evidence="1">Oxygen-dependent choline dehydrogenase</fullName>
        <shortName evidence="1">CDH</shortName>
        <shortName evidence="1">CHD</shortName>
        <ecNumber evidence="1">1.1.99.1</ecNumber>
    </recommendedName>
    <alternativeName>
        <fullName evidence="1">Betaine aldehyde dehydrogenase</fullName>
        <shortName evidence="1">BADH</shortName>
        <ecNumber evidence="1">1.2.1.8</ecNumber>
    </alternativeName>
</protein>
<reference key="1">
    <citation type="journal article" date="2009" name="Appl. Environ. Microbiol.">
        <title>Rhizobium sp. strain NGR234 possesses a remarkable number of secretion systems.</title>
        <authorList>
            <person name="Schmeisser C."/>
            <person name="Liesegang H."/>
            <person name="Krysciak D."/>
            <person name="Bakkou N."/>
            <person name="Le Quere A."/>
            <person name="Wollherr A."/>
            <person name="Heinemeyer I."/>
            <person name="Morgenstern B."/>
            <person name="Pommerening-Roeser A."/>
            <person name="Flores M."/>
            <person name="Palacios R."/>
            <person name="Brenner S."/>
            <person name="Gottschalk G."/>
            <person name="Schmitz R.A."/>
            <person name="Broughton W.J."/>
            <person name="Perret X."/>
            <person name="Strittmatter A.W."/>
            <person name="Streit W.R."/>
        </authorList>
    </citation>
    <scope>NUCLEOTIDE SEQUENCE [LARGE SCALE GENOMIC DNA]</scope>
    <source>
        <strain>NBRC 101917 / NGR234</strain>
    </source>
</reference>